<evidence type="ECO:0000255" key="1">
    <source>
        <dbReference type="HAMAP-Rule" id="MF_01705"/>
    </source>
</evidence>
<evidence type="ECO:0000255" key="2">
    <source>
        <dbReference type="PROSITE-ProRule" id="PRU01213"/>
    </source>
</evidence>
<keyword id="KW-0067">ATP-binding</keyword>
<keyword id="KW-0997">Cell inner membrane</keyword>
<keyword id="KW-1003">Cell membrane</keyword>
<keyword id="KW-0472">Membrane</keyword>
<keyword id="KW-0500">Molybdenum</keyword>
<keyword id="KW-0547">Nucleotide-binding</keyword>
<keyword id="KW-1185">Reference proteome</keyword>
<keyword id="KW-1278">Translocase</keyword>
<keyword id="KW-0813">Transport</keyword>
<gene>
    <name evidence="1" type="primary">modC</name>
    <name type="ordered locus">STM0783</name>
</gene>
<name>MODC_SALTY</name>
<sequence length="352" mass="39055">MLELNFSQTLGTHCLTLNETLPASGITAIFGVSGAGKTSLINAISGLTRPQKGRIALNGRVLHDAENGICLTPEKRRIGYVFQDARLFPHYKVRGNLRYGMAKSMTGQFDKLVSLLGIEALLDRLPGSLSGGEKQRVAIGRALLTAPELLLLDEPLASLDIPRKRELLPYLQRLAREINIPMLYVSHSLDEILHLADKVMVLEDGQVKAFGPLEEVWGSSVMHPWLPKEQQSSILKVSVLEHHPHYAMTALALGDQHLWVNKLNQPLQSTLRIRIQASDVSLVLQPPQQTSIRNVLRAKVANCYDDNGQVEVQLEIGGRTLWARISPWARDELNIKPGLWLYAQVKSVSITA</sequence>
<reference key="1">
    <citation type="journal article" date="2001" name="Nature">
        <title>Complete genome sequence of Salmonella enterica serovar Typhimurium LT2.</title>
        <authorList>
            <person name="McClelland M."/>
            <person name="Sanderson K.E."/>
            <person name="Spieth J."/>
            <person name="Clifton S.W."/>
            <person name="Latreille P."/>
            <person name="Courtney L."/>
            <person name="Porwollik S."/>
            <person name="Ali J."/>
            <person name="Dante M."/>
            <person name="Du F."/>
            <person name="Hou S."/>
            <person name="Layman D."/>
            <person name="Leonard S."/>
            <person name="Nguyen C."/>
            <person name="Scott K."/>
            <person name="Holmes A."/>
            <person name="Grewal N."/>
            <person name="Mulvaney E."/>
            <person name="Ryan E."/>
            <person name="Sun H."/>
            <person name="Florea L."/>
            <person name="Miller W."/>
            <person name="Stoneking T."/>
            <person name="Nhan M."/>
            <person name="Waterston R."/>
            <person name="Wilson R.K."/>
        </authorList>
    </citation>
    <scope>NUCLEOTIDE SEQUENCE [LARGE SCALE GENOMIC DNA]</scope>
    <source>
        <strain>LT2 / SGSC1412 / ATCC 700720</strain>
    </source>
</reference>
<protein>
    <recommendedName>
        <fullName evidence="1">Molybdenum import ATP-binding protein ModC</fullName>
        <ecNumber evidence="1">7.3.2.5</ecNumber>
    </recommendedName>
</protein>
<proteinExistence type="inferred from homology"/>
<dbReference type="EC" id="7.3.2.5" evidence="1"/>
<dbReference type="EMBL" id="AE006468">
    <property type="protein sequence ID" value="AAL19721.1"/>
    <property type="molecule type" value="Genomic_DNA"/>
</dbReference>
<dbReference type="RefSeq" id="NP_459762.1">
    <property type="nucleotide sequence ID" value="NC_003197.2"/>
</dbReference>
<dbReference type="RefSeq" id="WP_000891710.1">
    <property type="nucleotide sequence ID" value="NC_003197.2"/>
</dbReference>
<dbReference type="SMR" id="Q8ZQR6"/>
<dbReference type="STRING" id="99287.STM0783"/>
<dbReference type="PaxDb" id="99287-STM0783"/>
<dbReference type="GeneID" id="1252303"/>
<dbReference type="KEGG" id="stm:STM0783"/>
<dbReference type="PATRIC" id="fig|99287.12.peg.816"/>
<dbReference type="HOGENOM" id="CLU_000604_1_1_6"/>
<dbReference type="OMA" id="QWLYAQI"/>
<dbReference type="PhylomeDB" id="Q8ZQR6"/>
<dbReference type="BioCyc" id="SENT99287:STM0783-MONOMER"/>
<dbReference type="Proteomes" id="UP000001014">
    <property type="component" value="Chromosome"/>
</dbReference>
<dbReference type="GO" id="GO:0005886">
    <property type="term" value="C:plasma membrane"/>
    <property type="evidence" value="ECO:0007669"/>
    <property type="project" value="UniProtKB-SubCell"/>
</dbReference>
<dbReference type="GO" id="GO:0015412">
    <property type="term" value="F:ABC-type molybdate transporter activity"/>
    <property type="evidence" value="ECO:0007669"/>
    <property type="project" value="UniProtKB-EC"/>
</dbReference>
<dbReference type="GO" id="GO:0005524">
    <property type="term" value="F:ATP binding"/>
    <property type="evidence" value="ECO:0007669"/>
    <property type="project" value="UniProtKB-KW"/>
</dbReference>
<dbReference type="GO" id="GO:0016887">
    <property type="term" value="F:ATP hydrolysis activity"/>
    <property type="evidence" value="ECO:0007669"/>
    <property type="project" value="InterPro"/>
</dbReference>
<dbReference type="FunFam" id="2.40.50.100:FF:000037">
    <property type="entry name" value="Molybdenum import ATP-binding protein ModC"/>
    <property type="match status" value="1"/>
</dbReference>
<dbReference type="FunFam" id="3.40.50.300:FF:000634">
    <property type="entry name" value="Molybdenum import ATP-binding protein ModC"/>
    <property type="match status" value="1"/>
</dbReference>
<dbReference type="Gene3D" id="2.40.50.100">
    <property type="match status" value="1"/>
</dbReference>
<dbReference type="Gene3D" id="3.40.50.300">
    <property type="entry name" value="P-loop containing nucleotide triphosphate hydrolases"/>
    <property type="match status" value="1"/>
</dbReference>
<dbReference type="InterPro" id="IPR003593">
    <property type="entry name" value="AAA+_ATPase"/>
</dbReference>
<dbReference type="InterPro" id="IPR003439">
    <property type="entry name" value="ABC_transporter-like_ATP-bd"/>
</dbReference>
<dbReference type="InterPro" id="IPR017871">
    <property type="entry name" value="ABC_transporter-like_CS"/>
</dbReference>
<dbReference type="InterPro" id="IPR008995">
    <property type="entry name" value="Mo/tungstate-bd_C_term_dom"/>
</dbReference>
<dbReference type="InterPro" id="IPR011868">
    <property type="entry name" value="ModC_ABC_ATP-bd"/>
</dbReference>
<dbReference type="InterPro" id="IPR050334">
    <property type="entry name" value="Molybdenum_import_ModC"/>
</dbReference>
<dbReference type="InterPro" id="IPR004606">
    <property type="entry name" value="Mop_domain"/>
</dbReference>
<dbReference type="InterPro" id="IPR027417">
    <property type="entry name" value="P-loop_NTPase"/>
</dbReference>
<dbReference type="InterPro" id="IPR005116">
    <property type="entry name" value="Transp-assoc_OB_typ1"/>
</dbReference>
<dbReference type="NCBIfam" id="TIGR02142">
    <property type="entry name" value="modC_ABC"/>
    <property type="match status" value="1"/>
</dbReference>
<dbReference type="NCBIfam" id="TIGR00638">
    <property type="entry name" value="Mop"/>
    <property type="match status" value="1"/>
</dbReference>
<dbReference type="NCBIfam" id="NF008355">
    <property type="entry name" value="PRK11144.1"/>
    <property type="match status" value="1"/>
</dbReference>
<dbReference type="PANTHER" id="PTHR43514">
    <property type="entry name" value="ABC TRANSPORTER I FAMILY MEMBER 10"/>
    <property type="match status" value="1"/>
</dbReference>
<dbReference type="PANTHER" id="PTHR43514:SF4">
    <property type="entry name" value="ABC TRANSPORTER I FAMILY MEMBER 10"/>
    <property type="match status" value="1"/>
</dbReference>
<dbReference type="Pfam" id="PF00005">
    <property type="entry name" value="ABC_tran"/>
    <property type="match status" value="1"/>
</dbReference>
<dbReference type="Pfam" id="PF03459">
    <property type="entry name" value="TOBE"/>
    <property type="match status" value="1"/>
</dbReference>
<dbReference type="SMART" id="SM00382">
    <property type="entry name" value="AAA"/>
    <property type="match status" value="1"/>
</dbReference>
<dbReference type="SUPFAM" id="SSF50331">
    <property type="entry name" value="MOP-like"/>
    <property type="match status" value="1"/>
</dbReference>
<dbReference type="SUPFAM" id="SSF52540">
    <property type="entry name" value="P-loop containing nucleoside triphosphate hydrolases"/>
    <property type="match status" value="1"/>
</dbReference>
<dbReference type="PROSITE" id="PS00211">
    <property type="entry name" value="ABC_TRANSPORTER_1"/>
    <property type="match status" value="1"/>
</dbReference>
<dbReference type="PROSITE" id="PS50893">
    <property type="entry name" value="ABC_TRANSPORTER_2"/>
    <property type="match status" value="1"/>
</dbReference>
<dbReference type="PROSITE" id="PS51241">
    <property type="entry name" value="MODC"/>
    <property type="match status" value="1"/>
</dbReference>
<dbReference type="PROSITE" id="PS51866">
    <property type="entry name" value="MOP"/>
    <property type="match status" value="1"/>
</dbReference>
<accession>Q8ZQR6</accession>
<feature type="chain" id="PRO_0000092556" description="Molybdenum import ATP-binding protein ModC">
    <location>
        <begin position="1"/>
        <end position="352"/>
    </location>
</feature>
<feature type="domain" description="ABC transporter" evidence="1">
    <location>
        <begin position="1"/>
        <end position="229"/>
    </location>
</feature>
<feature type="domain" description="Mop" evidence="2">
    <location>
        <begin position="289"/>
        <end position="352"/>
    </location>
</feature>
<feature type="binding site" evidence="1">
    <location>
        <begin position="31"/>
        <end position="38"/>
    </location>
    <ligand>
        <name>ATP</name>
        <dbReference type="ChEBI" id="CHEBI:30616"/>
    </ligand>
</feature>
<comment type="function">
    <text evidence="1">Part of the ABC transporter complex ModABC involved in molybdenum import. Responsible for energy coupling to the transport system.</text>
</comment>
<comment type="catalytic activity">
    <reaction evidence="1">
        <text>molybdate(out) + ATP + H2O = molybdate(in) + ADP + phosphate + H(+)</text>
        <dbReference type="Rhea" id="RHEA:22020"/>
        <dbReference type="ChEBI" id="CHEBI:15377"/>
        <dbReference type="ChEBI" id="CHEBI:15378"/>
        <dbReference type="ChEBI" id="CHEBI:30616"/>
        <dbReference type="ChEBI" id="CHEBI:36264"/>
        <dbReference type="ChEBI" id="CHEBI:43474"/>
        <dbReference type="ChEBI" id="CHEBI:456216"/>
        <dbReference type="EC" id="7.3.2.5"/>
    </reaction>
</comment>
<comment type="subunit">
    <text evidence="1">The complex is composed of two ATP-binding proteins (ModC), two transmembrane proteins (ModB) and a solute-binding protein (ModA).</text>
</comment>
<comment type="subcellular location">
    <subcellularLocation>
        <location evidence="1">Cell inner membrane</location>
        <topology evidence="1">Peripheral membrane protein</topology>
    </subcellularLocation>
</comment>
<comment type="similarity">
    <text evidence="1">Belongs to the ABC transporter superfamily. Molybdate importer (TC 3.A.1.8) family.</text>
</comment>
<organism>
    <name type="scientific">Salmonella typhimurium (strain LT2 / SGSC1412 / ATCC 700720)</name>
    <dbReference type="NCBI Taxonomy" id="99287"/>
    <lineage>
        <taxon>Bacteria</taxon>
        <taxon>Pseudomonadati</taxon>
        <taxon>Pseudomonadota</taxon>
        <taxon>Gammaproteobacteria</taxon>
        <taxon>Enterobacterales</taxon>
        <taxon>Enterobacteriaceae</taxon>
        <taxon>Salmonella</taxon>
    </lineage>
</organism>